<keyword id="KW-0479">Metal-binding</keyword>
<keyword id="KW-0597">Phosphoprotein</keyword>
<keyword id="KW-1185">Reference proteome</keyword>
<keyword id="KW-0677">Repeat</keyword>
<keyword id="KW-0862">Zinc</keyword>
<keyword id="KW-0863">Zinc-finger</keyword>
<feature type="chain" id="PRO_0000321915" description="Differentially expressed in FDCP 8 homolog">
    <location>
        <begin position="1"/>
        <end position="451"/>
    </location>
</feature>
<feature type="zinc finger region" description="Phorbol-ester/DAG-type 1" evidence="2">
    <location>
        <begin position="138"/>
        <end position="189"/>
    </location>
</feature>
<feature type="zinc finger region" description="Phorbol-ester/DAG-type 2" evidence="2">
    <location>
        <begin position="368"/>
        <end position="428"/>
    </location>
</feature>
<feature type="region of interest" description="Disordered" evidence="3">
    <location>
        <begin position="18"/>
        <end position="48"/>
    </location>
</feature>
<feature type="compositionally biased region" description="Basic and acidic residues" evidence="3">
    <location>
        <begin position="25"/>
        <end position="36"/>
    </location>
</feature>
<feature type="modified residue" description="Phosphoserine" evidence="5">
    <location>
        <position position="440"/>
    </location>
</feature>
<organism>
    <name type="scientific">Rattus norvegicus</name>
    <name type="common">Rat</name>
    <dbReference type="NCBI Taxonomy" id="10116"/>
    <lineage>
        <taxon>Eukaryota</taxon>
        <taxon>Metazoa</taxon>
        <taxon>Chordata</taxon>
        <taxon>Craniata</taxon>
        <taxon>Vertebrata</taxon>
        <taxon>Euteleostomi</taxon>
        <taxon>Mammalia</taxon>
        <taxon>Eutheria</taxon>
        <taxon>Euarchontoglires</taxon>
        <taxon>Glires</taxon>
        <taxon>Rodentia</taxon>
        <taxon>Myomorpha</taxon>
        <taxon>Muroidea</taxon>
        <taxon>Muridae</taxon>
        <taxon>Murinae</taxon>
        <taxon>Rattus</taxon>
    </lineage>
</organism>
<proteinExistence type="evidence at protein level"/>
<sequence>MEYDEKLVRFRQAHLNPFNKHLGPRHHEQEPNEKAQEVTSEDTLPELPAGEPEFCYSERMMDLGLSEDHFSRPVGLFLASDVQQLRQAIEECKQVILELPEQSEKQKDAVVRLIHLRLKLQELKDPNEEEPNIRVLLEHRFYKEKSKSVKQTCDKCNTIIWGLIQTWYTCTGCYYRCHSKCLNLISRPCVSSKVSHQAEYELNICPETGLDSQDYRCAECRAPISLRGVPSEARQCDYTGQYYCSHCHWNDLAVIPARVVHNWDFEPRKVSRCSMRYLALMVSRPVLRLREINPLLFNYVEELVEIRKLRQDILLMKPYFITCKEAMEARLLLQLQDRQHFVENDEMYSIQDLLEVHMGRLSCSLTEIHTIFAKHIKLDCERCQAKGFVCELCKEGDVLFPFDSHTSVCNDCSAVFHRDCYYDNSTTCPKCARLTLRKQSLFQEPGLDVDA</sequence>
<gene>
    <name type="primary">Def8</name>
</gene>
<accession>Q4V8I4</accession>
<comment type="function">
    <text evidence="1">Positively regulates lysosome peripheral distribution and ruffled border formation in osteoclasts. Involved in bone resorption.</text>
</comment>
<comment type="subunit">
    <text evidence="1">Interacts (via C-terminus) with PLEKHM1; this interaction is weak but increased in a RAB7A-dependent manner.</text>
</comment>
<comment type="similarity">
    <text evidence="4">Belongs to the DEF8 family.</text>
</comment>
<name>DEFI8_RAT</name>
<dbReference type="EMBL" id="BC097376">
    <property type="protein sequence ID" value="AAH97376.1"/>
    <property type="molecule type" value="mRNA"/>
</dbReference>
<dbReference type="RefSeq" id="NP_001019945.1">
    <property type="nucleotide sequence ID" value="NM_001024774.1"/>
</dbReference>
<dbReference type="RefSeq" id="NP_001421506.1">
    <property type="nucleotide sequence ID" value="NM_001434577.1"/>
</dbReference>
<dbReference type="RefSeq" id="XP_006255831.1">
    <property type="nucleotide sequence ID" value="XM_006255769.2"/>
</dbReference>
<dbReference type="SMR" id="Q4V8I4"/>
<dbReference type="FunCoup" id="Q4V8I4">
    <property type="interactions" value="498"/>
</dbReference>
<dbReference type="STRING" id="10116.ENSRNOP00000000281"/>
<dbReference type="iPTMnet" id="Q4V8I4"/>
<dbReference type="PhosphoSitePlus" id="Q4V8I4"/>
<dbReference type="PaxDb" id="10116-ENSRNOP00000000281"/>
<dbReference type="Ensembl" id="ENSRNOT00000000281.6">
    <property type="protein sequence ID" value="ENSRNOP00000000281.5"/>
    <property type="gene ID" value="ENSRNOG00000000264.6"/>
</dbReference>
<dbReference type="GeneID" id="307973"/>
<dbReference type="KEGG" id="rno:307973"/>
<dbReference type="UCSC" id="RGD:1309008">
    <property type="organism name" value="rat"/>
</dbReference>
<dbReference type="AGR" id="RGD:1309008"/>
<dbReference type="CTD" id="54849"/>
<dbReference type="RGD" id="1309008">
    <property type="gene designation" value="Def8"/>
</dbReference>
<dbReference type="eggNOG" id="KOG1829">
    <property type="taxonomic scope" value="Eukaryota"/>
</dbReference>
<dbReference type="GeneTree" id="ENSGT00940000159182"/>
<dbReference type="HOGENOM" id="CLU_034500_4_0_1"/>
<dbReference type="InParanoid" id="Q4V8I4"/>
<dbReference type="OMA" id="NMICPKC"/>
<dbReference type="OrthoDB" id="1918044at2759"/>
<dbReference type="PhylomeDB" id="Q4V8I4"/>
<dbReference type="TreeFam" id="TF317067"/>
<dbReference type="PRO" id="PR:Q4V8I4"/>
<dbReference type="Proteomes" id="UP000002494">
    <property type="component" value="Chromosome 19"/>
</dbReference>
<dbReference type="Bgee" id="ENSRNOG00000000264">
    <property type="expression patterns" value="Expressed in adult mammalian kidney and 18 other cell types or tissues"/>
</dbReference>
<dbReference type="GO" id="GO:0008270">
    <property type="term" value="F:zinc ion binding"/>
    <property type="evidence" value="ECO:0007669"/>
    <property type="project" value="UniProtKB-KW"/>
</dbReference>
<dbReference type="GO" id="GO:0032418">
    <property type="term" value="P:lysosome localization"/>
    <property type="evidence" value="ECO:0000250"/>
    <property type="project" value="UniProtKB"/>
</dbReference>
<dbReference type="GO" id="GO:0045780">
    <property type="term" value="P:positive regulation of bone resorption"/>
    <property type="evidence" value="ECO:0000250"/>
    <property type="project" value="UniProtKB"/>
</dbReference>
<dbReference type="GO" id="GO:1900029">
    <property type="term" value="P:positive regulation of ruffle assembly"/>
    <property type="evidence" value="ECO:0000250"/>
    <property type="project" value="UniProtKB"/>
</dbReference>
<dbReference type="CDD" id="cd20819">
    <property type="entry name" value="C1_DEF8"/>
    <property type="match status" value="1"/>
</dbReference>
<dbReference type="FunFam" id="3.30.60.20:FF:000042">
    <property type="entry name" value="differentially expressed in FDCP 8 homolog isoform X2"/>
    <property type="match status" value="1"/>
</dbReference>
<dbReference type="Gene3D" id="3.30.60.20">
    <property type="match status" value="1"/>
</dbReference>
<dbReference type="InterPro" id="IPR046349">
    <property type="entry name" value="C1-like_sf"/>
</dbReference>
<dbReference type="InterPro" id="IPR051366">
    <property type="entry name" value="DEF8"/>
</dbReference>
<dbReference type="InterPro" id="IPR047983">
    <property type="entry name" value="DEF8_C1"/>
</dbReference>
<dbReference type="InterPro" id="IPR002219">
    <property type="entry name" value="PE/DAG-bd"/>
</dbReference>
<dbReference type="InterPro" id="IPR025258">
    <property type="entry name" value="RH_dom"/>
</dbReference>
<dbReference type="PANTHER" id="PTHR12326:SF3">
    <property type="entry name" value="DIFFERENTIALLY EXPRESSED IN FDCP 8 HOMOLOG"/>
    <property type="match status" value="1"/>
</dbReference>
<dbReference type="PANTHER" id="PTHR12326">
    <property type="entry name" value="PLECKSTRIN HOMOLOGY DOMAIN CONTAINING PROTEIN"/>
    <property type="match status" value="1"/>
</dbReference>
<dbReference type="Pfam" id="PF00130">
    <property type="entry name" value="C1_1"/>
    <property type="match status" value="1"/>
</dbReference>
<dbReference type="Pfam" id="PF13901">
    <property type="entry name" value="RH_dom"/>
    <property type="match status" value="1"/>
</dbReference>
<dbReference type="SMART" id="SM00109">
    <property type="entry name" value="C1"/>
    <property type="match status" value="2"/>
</dbReference>
<dbReference type="SMART" id="SM01175">
    <property type="entry name" value="DUF4206"/>
    <property type="match status" value="1"/>
</dbReference>
<dbReference type="SUPFAM" id="SSF57889">
    <property type="entry name" value="Cysteine-rich domain"/>
    <property type="match status" value="1"/>
</dbReference>
<dbReference type="PROSITE" id="PS00479">
    <property type="entry name" value="ZF_DAG_PE_1"/>
    <property type="match status" value="1"/>
</dbReference>
<dbReference type="PROSITE" id="PS50081">
    <property type="entry name" value="ZF_DAG_PE_2"/>
    <property type="match status" value="1"/>
</dbReference>
<evidence type="ECO:0000250" key="1">
    <source>
        <dbReference type="UniProtKB" id="Q99J78"/>
    </source>
</evidence>
<evidence type="ECO:0000255" key="2">
    <source>
        <dbReference type="PROSITE-ProRule" id="PRU00226"/>
    </source>
</evidence>
<evidence type="ECO:0000256" key="3">
    <source>
        <dbReference type="SAM" id="MobiDB-lite"/>
    </source>
</evidence>
<evidence type="ECO:0000305" key="4"/>
<evidence type="ECO:0007744" key="5">
    <source>
    </source>
</evidence>
<reference key="1">
    <citation type="journal article" date="2004" name="Genome Res.">
        <title>The status, quality, and expansion of the NIH full-length cDNA project: the Mammalian Gene Collection (MGC).</title>
        <authorList>
            <consortium name="The MGC Project Team"/>
        </authorList>
    </citation>
    <scope>NUCLEOTIDE SEQUENCE [LARGE SCALE MRNA]</scope>
    <source>
        <tissue>Placenta</tissue>
    </source>
</reference>
<reference key="2">
    <citation type="journal article" date="2012" name="Nat. Commun.">
        <title>Quantitative maps of protein phosphorylation sites across 14 different rat organs and tissues.</title>
        <authorList>
            <person name="Lundby A."/>
            <person name="Secher A."/>
            <person name="Lage K."/>
            <person name="Nordsborg N.B."/>
            <person name="Dmytriyev A."/>
            <person name="Lundby C."/>
            <person name="Olsen J.V."/>
        </authorList>
    </citation>
    <scope>PHOSPHORYLATION [LARGE SCALE ANALYSIS] AT SER-440</scope>
    <scope>IDENTIFICATION BY MASS SPECTROMETRY [LARGE SCALE ANALYSIS]</scope>
</reference>
<protein>
    <recommendedName>
        <fullName>Differentially expressed in FDCP 8 homolog</fullName>
        <shortName>DEF-8</shortName>
    </recommendedName>
</protein>